<reference key="1">
    <citation type="journal article" date="2005" name="Proc. Natl. Acad. Sci. U.S.A.">
        <title>The genome of Salinibacter ruber: convergence and gene exchange among hyperhalophilic bacteria and archaea.</title>
        <authorList>
            <person name="Mongodin E.F."/>
            <person name="Nelson K.E."/>
            <person name="Daugherty S."/>
            <person name="DeBoy R.T."/>
            <person name="Wister J."/>
            <person name="Khouri H."/>
            <person name="Weidman J."/>
            <person name="Walsh D.A."/>
            <person name="Papke R.T."/>
            <person name="Sanchez Perez G."/>
            <person name="Sharma A.K."/>
            <person name="Nesbo C.L."/>
            <person name="MacLeod D."/>
            <person name="Bapteste E."/>
            <person name="Doolittle W.F."/>
            <person name="Charlebois R.L."/>
            <person name="Legault B."/>
            <person name="Rodriguez-Valera F."/>
        </authorList>
    </citation>
    <scope>NUCLEOTIDE SEQUENCE [LARGE SCALE GENOMIC DNA]</scope>
    <source>
        <strain>DSM 13855 / CECT 5946 / M31</strain>
    </source>
</reference>
<organism>
    <name type="scientific">Salinibacter ruber (strain DSM 13855 / M31)</name>
    <dbReference type="NCBI Taxonomy" id="309807"/>
    <lineage>
        <taxon>Bacteria</taxon>
        <taxon>Pseudomonadati</taxon>
        <taxon>Rhodothermota</taxon>
        <taxon>Rhodothermia</taxon>
        <taxon>Rhodothermales</taxon>
        <taxon>Salinibacteraceae</taxon>
        <taxon>Salinibacter</taxon>
    </lineage>
</organism>
<name>RPOA_SALRD</name>
<protein>
    <recommendedName>
        <fullName evidence="1">DNA-directed RNA polymerase subunit alpha</fullName>
        <shortName evidence="1">RNAP subunit alpha</shortName>
        <ecNumber evidence="1">2.7.7.6</ecNumber>
    </recommendedName>
    <alternativeName>
        <fullName evidence="1">RNA polymerase subunit alpha</fullName>
    </alternativeName>
    <alternativeName>
        <fullName evidence="1">Transcriptase subunit alpha</fullName>
    </alternativeName>
</protein>
<accession>Q2S3N9</accession>
<gene>
    <name evidence="1" type="primary">rpoA</name>
    <name type="ordered locus">SRU_1060</name>
</gene>
<evidence type="ECO:0000255" key="1">
    <source>
        <dbReference type="HAMAP-Rule" id="MF_00059"/>
    </source>
</evidence>
<evidence type="ECO:0000305" key="2"/>
<dbReference type="EC" id="2.7.7.6" evidence="1"/>
<dbReference type="EMBL" id="CP000159">
    <property type="protein sequence ID" value="ABC44696.1"/>
    <property type="status" value="ALT_INIT"/>
    <property type="molecule type" value="Genomic_DNA"/>
</dbReference>
<dbReference type="RefSeq" id="WP_013061621.1">
    <property type="nucleotide sequence ID" value="NC_007677.1"/>
</dbReference>
<dbReference type="RefSeq" id="YP_445192.1">
    <property type="nucleotide sequence ID" value="NC_007677.1"/>
</dbReference>
<dbReference type="SMR" id="Q2S3N9"/>
<dbReference type="STRING" id="309807.SRU_1060"/>
<dbReference type="EnsemblBacteria" id="ABC44696">
    <property type="protein sequence ID" value="ABC44696"/>
    <property type="gene ID" value="SRU_1060"/>
</dbReference>
<dbReference type="KEGG" id="sru:SRU_1060"/>
<dbReference type="PATRIC" id="fig|309807.25.peg.1098"/>
<dbReference type="eggNOG" id="COG0202">
    <property type="taxonomic scope" value="Bacteria"/>
</dbReference>
<dbReference type="HOGENOM" id="CLU_053084_0_1_10"/>
<dbReference type="OrthoDB" id="9805706at2"/>
<dbReference type="Proteomes" id="UP000008674">
    <property type="component" value="Chromosome"/>
</dbReference>
<dbReference type="GO" id="GO:0005737">
    <property type="term" value="C:cytoplasm"/>
    <property type="evidence" value="ECO:0007669"/>
    <property type="project" value="UniProtKB-ARBA"/>
</dbReference>
<dbReference type="GO" id="GO:0000428">
    <property type="term" value="C:DNA-directed RNA polymerase complex"/>
    <property type="evidence" value="ECO:0007669"/>
    <property type="project" value="UniProtKB-KW"/>
</dbReference>
<dbReference type="GO" id="GO:0003677">
    <property type="term" value="F:DNA binding"/>
    <property type="evidence" value="ECO:0007669"/>
    <property type="project" value="UniProtKB-UniRule"/>
</dbReference>
<dbReference type="GO" id="GO:0003899">
    <property type="term" value="F:DNA-directed RNA polymerase activity"/>
    <property type="evidence" value="ECO:0007669"/>
    <property type="project" value="UniProtKB-UniRule"/>
</dbReference>
<dbReference type="GO" id="GO:0046983">
    <property type="term" value="F:protein dimerization activity"/>
    <property type="evidence" value="ECO:0007669"/>
    <property type="project" value="InterPro"/>
</dbReference>
<dbReference type="GO" id="GO:0006351">
    <property type="term" value="P:DNA-templated transcription"/>
    <property type="evidence" value="ECO:0007669"/>
    <property type="project" value="UniProtKB-UniRule"/>
</dbReference>
<dbReference type="CDD" id="cd06928">
    <property type="entry name" value="RNAP_alpha_NTD"/>
    <property type="match status" value="1"/>
</dbReference>
<dbReference type="FunFam" id="2.170.120.12:FF:000001">
    <property type="entry name" value="DNA-directed RNA polymerase subunit alpha"/>
    <property type="match status" value="1"/>
</dbReference>
<dbReference type="Gene3D" id="1.10.150.20">
    <property type="entry name" value="5' to 3' exonuclease, C-terminal subdomain"/>
    <property type="match status" value="1"/>
</dbReference>
<dbReference type="Gene3D" id="2.170.120.12">
    <property type="entry name" value="DNA-directed RNA polymerase, insert domain"/>
    <property type="match status" value="1"/>
</dbReference>
<dbReference type="Gene3D" id="3.30.1360.10">
    <property type="entry name" value="RNA polymerase, RBP11-like subunit"/>
    <property type="match status" value="1"/>
</dbReference>
<dbReference type="HAMAP" id="MF_00059">
    <property type="entry name" value="RNApol_bact_RpoA"/>
    <property type="match status" value="1"/>
</dbReference>
<dbReference type="InterPro" id="IPR011262">
    <property type="entry name" value="DNA-dir_RNA_pol_insert"/>
</dbReference>
<dbReference type="InterPro" id="IPR011263">
    <property type="entry name" value="DNA-dir_RNA_pol_RpoA/D/Rpb3"/>
</dbReference>
<dbReference type="InterPro" id="IPR011773">
    <property type="entry name" value="DNA-dir_RpoA"/>
</dbReference>
<dbReference type="InterPro" id="IPR036603">
    <property type="entry name" value="RBP11-like"/>
</dbReference>
<dbReference type="InterPro" id="IPR011260">
    <property type="entry name" value="RNAP_asu_C"/>
</dbReference>
<dbReference type="InterPro" id="IPR036643">
    <property type="entry name" value="RNApol_insert_sf"/>
</dbReference>
<dbReference type="NCBIfam" id="NF003513">
    <property type="entry name" value="PRK05182.1-2"/>
    <property type="match status" value="1"/>
</dbReference>
<dbReference type="NCBIfam" id="NF003516">
    <property type="entry name" value="PRK05182.2-2"/>
    <property type="match status" value="1"/>
</dbReference>
<dbReference type="NCBIfam" id="NF003519">
    <property type="entry name" value="PRK05182.2-5"/>
    <property type="match status" value="1"/>
</dbReference>
<dbReference type="NCBIfam" id="TIGR02027">
    <property type="entry name" value="rpoA"/>
    <property type="match status" value="1"/>
</dbReference>
<dbReference type="Pfam" id="PF01000">
    <property type="entry name" value="RNA_pol_A_bac"/>
    <property type="match status" value="1"/>
</dbReference>
<dbReference type="Pfam" id="PF03118">
    <property type="entry name" value="RNA_pol_A_CTD"/>
    <property type="match status" value="1"/>
</dbReference>
<dbReference type="Pfam" id="PF01193">
    <property type="entry name" value="RNA_pol_L"/>
    <property type="match status" value="1"/>
</dbReference>
<dbReference type="SMART" id="SM00662">
    <property type="entry name" value="RPOLD"/>
    <property type="match status" value="1"/>
</dbReference>
<dbReference type="SUPFAM" id="SSF47789">
    <property type="entry name" value="C-terminal domain of RNA polymerase alpha subunit"/>
    <property type="match status" value="1"/>
</dbReference>
<dbReference type="SUPFAM" id="SSF56553">
    <property type="entry name" value="Insert subdomain of RNA polymerase alpha subunit"/>
    <property type="match status" value="1"/>
</dbReference>
<dbReference type="SUPFAM" id="SSF55257">
    <property type="entry name" value="RBP11-like subunits of RNA polymerase"/>
    <property type="match status" value="1"/>
</dbReference>
<sequence length="328" mass="36701">MSNHGLQMPEGVHVEEVSDSEGQFVMGPLERGYGVTIGNALRRVLLSSLRGLAITAVKIDGVQHEFSTIPGVTEDVADLILNLKEVRFKADEMQEGHLHLNLEGPGNWTAADIDEATAEYDVLNPDQHVATLAEDAVVNVDLRVGYGRGYVPSEENKREDDPIGVIAIDSIFTPIKNVNYEVKPTRVGQKIDYEELLLDVETDGSLTPEEAITQGASILRDHVSFFIQLEEEPEPVVEEQEVDEEVKRIRELLAQPVDELDLSVRSHNCLKAANIKTIGDLVRREEDEMLKFRNFGRKSLQELVEVLDERGLQFGMDVEEYLEEKKAS</sequence>
<proteinExistence type="inferred from homology"/>
<comment type="function">
    <text evidence="1">DNA-dependent RNA polymerase catalyzes the transcription of DNA into RNA using the four ribonucleoside triphosphates as substrates.</text>
</comment>
<comment type="catalytic activity">
    <reaction evidence="1">
        <text>RNA(n) + a ribonucleoside 5'-triphosphate = RNA(n+1) + diphosphate</text>
        <dbReference type="Rhea" id="RHEA:21248"/>
        <dbReference type="Rhea" id="RHEA-COMP:14527"/>
        <dbReference type="Rhea" id="RHEA-COMP:17342"/>
        <dbReference type="ChEBI" id="CHEBI:33019"/>
        <dbReference type="ChEBI" id="CHEBI:61557"/>
        <dbReference type="ChEBI" id="CHEBI:140395"/>
        <dbReference type="EC" id="2.7.7.6"/>
    </reaction>
</comment>
<comment type="subunit">
    <text evidence="1">Homodimer. The RNAP catalytic core consists of 2 alpha, 1 beta, 1 beta' and 1 omega subunit. When a sigma factor is associated with the core the holoenzyme is formed, which can initiate transcription.</text>
</comment>
<comment type="domain">
    <text evidence="1">The N-terminal domain is essential for RNAP assembly and basal transcription, whereas the C-terminal domain is involved in interaction with transcriptional regulators and with upstream promoter elements.</text>
</comment>
<comment type="similarity">
    <text evidence="1">Belongs to the RNA polymerase alpha chain family.</text>
</comment>
<comment type="sequence caution" evidence="2">
    <conflict type="erroneous initiation">
        <sequence resource="EMBL-CDS" id="ABC44696"/>
    </conflict>
</comment>
<keyword id="KW-0240">DNA-directed RNA polymerase</keyword>
<keyword id="KW-0548">Nucleotidyltransferase</keyword>
<keyword id="KW-1185">Reference proteome</keyword>
<keyword id="KW-0804">Transcription</keyword>
<keyword id="KW-0808">Transferase</keyword>
<feature type="chain" id="PRO_0000264542" description="DNA-directed RNA polymerase subunit alpha">
    <location>
        <begin position="1"/>
        <end position="328"/>
    </location>
</feature>
<feature type="region of interest" description="Alpha N-terminal domain (alpha-NTD)" evidence="1">
    <location>
        <begin position="1"/>
        <end position="230"/>
    </location>
</feature>
<feature type="region of interest" description="Alpha C-terminal domain (alpha-CTD)" evidence="1">
    <location>
        <begin position="248"/>
        <end position="328"/>
    </location>
</feature>